<protein>
    <recommendedName>
        <fullName evidence="1">Ribosome-binding factor A</fullName>
    </recommendedName>
</protein>
<proteinExistence type="inferred from homology"/>
<comment type="function">
    <text evidence="1">One of several proteins that assist in the late maturation steps of the functional core of the 30S ribosomal subunit. Associates with free 30S ribosomal subunits (but not with 30S subunits that are part of 70S ribosomes or polysomes). Required for efficient processing of 16S rRNA. May interact with the 5'-terminal helix region of 16S rRNA.</text>
</comment>
<comment type="subunit">
    <text evidence="1">Monomer. Binds 30S ribosomal subunits, but not 50S ribosomal subunits or 70S ribosomes.</text>
</comment>
<comment type="subcellular location">
    <subcellularLocation>
        <location evidence="1">Cytoplasm</location>
    </subcellularLocation>
</comment>
<comment type="similarity">
    <text evidence="1">Belongs to the RbfA family.</text>
</comment>
<organism>
    <name type="scientific">Ralstonia nicotianae (strain ATCC BAA-1114 / GMI1000)</name>
    <name type="common">Ralstonia solanacearum</name>
    <dbReference type="NCBI Taxonomy" id="267608"/>
    <lineage>
        <taxon>Bacteria</taxon>
        <taxon>Pseudomonadati</taxon>
        <taxon>Pseudomonadota</taxon>
        <taxon>Betaproteobacteria</taxon>
        <taxon>Burkholderiales</taxon>
        <taxon>Burkholderiaceae</taxon>
        <taxon>Ralstonia</taxon>
        <taxon>Ralstonia solanacearum species complex</taxon>
    </lineage>
</organism>
<feature type="chain" id="PRO_0000102716" description="Ribosome-binding factor A">
    <location>
        <begin position="1"/>
        <end position="123"/>
    </location>
</feature>
<gene>
    <name evidence="1" type="primary">rbfA</name>
    <name type="ordered locus">RSc1290</name>
    <name type="ORF">RS02803</name>
</gene>
<sequence>MPKKSGSASGRNLRIADQIQRDLAELIQREIKNPAMGLVTLQSVSLTPDYAHAKIYFTVLGAEPDAAAAILNEKAGYLHSLLFKRLHIHTVPTLHFHYDGSVERGIEMSRLIDQANASRAKDD</sequence>
<evidence type="ECO:0000255" key="1">
    <source>
        <dbReference type="HAMAP-Rule" id="MF_00003"/>
    </source>
</evidence>
<accession>Q8XZV5</accession>
<reference key="1">
    <citation type="journal article" date="2002" name="Nature">
        <title>Genome sequence of the plant pathogen Ralstonia solanacearum.</title>
        <authorList>
            <person name="Salanoubat M."/>
            <person name="Genin S."/>
            <person name="Artiguenave F."/>
            <person name="Gouzy J."/>
            <person name="Mangenot S."/>
            <person name="Arlat M."/>
            <person name="Billault A."/>
            <person name="Brottier P."/>
            <person name="Camus J.-C."/>
            <person name="Cattolico L."/>
            <person name="Chandler M."/>
            <person name="Choisne N."/>
            <person name="Claudel-Renard C."/>
            <person name="Cunnac S."/>
            <person name="Demange N."/>
            <person name="Gaspin C."/>
            <person name="Lavie M."/>
            <person name="Moisan A."/>
            <person name="Robert C."/>
            <person name="Saurin W."/>
            <person name="Schiex T."/>
            <person name="Siguier P."/>
            <person name="Thebault P."/>
            <person name="Whalen M."/>
            <person name="Wincker P."/>
            <person name="Levy M."/>
            <person name="Weissenbach J."/>
            <person name="Boucher C.A."/>
        </authorList>
    </citation>
    <scope>NUCLEOTIDE SEQUENCE [LARGE SCALE GENOMIC DNA]</scope>
    <source>
        <strain>ATCC BAA-1114 / GMI1000</strain>
    </source>
</reference>
<name>RBFA_RALN1</name>
<keyword id="KW-0963">Cytoplasm</keyword>
<keyword id="KW-1185">Reference proteome</keyword>
<keyword id="KW-0690">Ribosome biogenesis</keyword>
<dbReference type="EMBL" id="AL646052">
    <property type="protein sequence ID" value="CAD14992.1"/>
    <property type="molecule type" value="Genomic_DNA"/>
</dbReference>
<dbReference type="RefSeq" id="WP_011001239.1">
    <property type="nucleotide sequence ID" value="NC_003295.1"/>
</dbReference>
<dbReference type="SMR" id="Q8XZV5"/>
<dbReference type="STRING" id="267608.RSc1290"/>
<dbReference type="EnsemblBacteria" id="CAD14992">
    <property type="protein sequence ID" value="CAD14992"/>
    <property type="gene ID" value="RSc1290"/>
</dbReference>
<dbReference type="GeneID" id="93852412"/>
<dbReference type="KEGG" id="rso:RSc1290"/>
<dbReference type="eggNOG" id="COG0858">
    <property type="taxonomic scope" value="Bacteria"/>
</dbReference>
<dbReference type="HOGENOM" id="CLU_089475_5_1_4"/>
<dbReference type="Proteomes" id="UP000001436">
    <property type="component" value="Chromosome"/>
</dbReference>
<dbReference type="GO" id="GO:0005829">
    <property type="term" value="C:cytosol"/>
    <property type="evidence" value="ECO:0007669"/>
    <property type="project" value="TreeGrafter"/>
</dbReference>
<dbReference type="GO" id="GO:0043024">
    <property type="term" value="F:ribosomal small subunit binding"/>
    <property type="evidence" value="ECO:0007669"/>
    <property type="project" value="TreeGrafter"/>
</dbReference>
<dbReference type="GO" id="GO:0030490">
    <property type="term" value="P:maturation of SSU-rRNA"/>
    <property type="evidence" value="ECO:0007669"/>
    <property type="project" value="UniProtKB-UniRule"/>
</dbReference>
<dbReference type="Gene3D" id="3.30.300.20">
    <property type="match status" value="1"/>
</dbReference>
<dbReference type="HAMAP" id="MF_00003">
    <property type="entry name" value="RbfA"/>
    <property type="match status" value="1"/>
</dbReference>
<dbReference type="InterPro" id="IPR015946">
    <property type="entry name" value="KH_dom-like_a/b"/>
</dbReference>
<dbReference type="InterPro" id="IPR000238">
    <property type="entry name" value="RbfA"/>
</dbReference>
<dbReference type="InterPro" id="IPR023799">
    <property type="entry name" value="RbfA_dom_sf"/>
</dbReference>
<dbReference type="NCBIfam" id="TIGR00082">
    <property type="entry name" value="rbfA"/>
    <property type="match status" value="1"/>
</dbReference>
<dbReference type="PANTHER" id="PTHR33515">
    <property type="entry name" value="RIBOSOME-BINDING FACTOR A, CHLOROPLASTIC-RELATED"/>
    <property type="match status" value="1"/>
</dbReference>
<dbReference type="PANTHER" id="PTHR33515:SF1">
    <property type="entry name" value="RIBOSOME-BINDING FACTOR A, CHLOROPLASTIC-RELATED"/>
    <property type="match status" value="1"/>
</dbReference>
<dbReference type="Pfam" id="PF02033">
    <property type="entry name" value="RBFA"/>
    <property type="match status" value="1"/>
</dbReference>
<dbReference type="SUPFAM" id="SSF89919">
    <property type="entry name" value="Ribosome-binding factor A, RbfA"/>
    <property type="match status" value="1"/>
</dbReference>